<organism>
    <name type="scientific">Sclerotinia sclerotiorum (strain ATCC 18683 / 1980 / Ss-1)</name>
    <name type="common">White mold</name>
    <name type="synonym">Whetzelinia sclerotiorum</name>
    <dbReference type="NCBI Taxonomy" id="665079"/>
    <lineage>
        <taxon>Eukaryota</taxon>
        <taxon>Fungi</taxon>
        <taxon>Dikarya</taxon>
        <taxon>Ascomycota</taxon>
        <taxon>Pezizomycotina</taxon>
        <taxon>Leotiomycetes</taxon>
        <taxon>Helotiales</taxon>
        <taxon>Sclerotiniaceae</taxon>
        <taxon>Sclerotinia</taxon>
    </lineage>
</organism>
<sequence>MEVMDHHHHTSSTRPNPTTRRMNFFLPNAIHMDSHLLYYRPQPGYGAPPPQGGYGYPQPPPPQQPYGYSQPPPQQYGGYNGVPPNAPQYGRPGMPSVNSNAYINGNQNAPPPPPQGMHSFGQGAPQNYAFQYSNCTGRRKALLIGINYFGQRGQLRGCINDVKNMSSYLHENFGYQRDDMVILTDDQQNPMSQPTKQNILRAMHWLVKDARPNDSLFFHYSGHGGQTKDLDGDEEDGYDEVIYPVDFRQVGHIVDDEMHRIMVQPLQPGVRLTAIFDSCHSGTALDLPYVYSTQGVLKEPNLAKEAGQGLLGVISSYSQGDMSGVASNLMGFFKKATTGDDAYNKTLATKTSPADVVMWSGSKDDQTSADATIAAQATGAMSWAFITAMKKNPQQSYVQLLNSIRDELATKYTQKPQLSCSHPLSMVPPLLL</sequence>
<accession>A7F075</accession>
<gene>
    <name type="primary">casA</name>
    <name type="ORF">SS1G_10992</name>
</gene>
<feature type="propeptide" id="PRO_0000333669" evidence="2">
    <location>
        <begin position="1"/>
        <end status="unknown"/>
    </location>
</feature>
<feature type="chain" id="PRO_0000333670" description="Metacaspase-1">
    <location>
        <begin status="unknown"/>
        <end position="432"/>
    </location>
</feature>
<feature type="region of interest" description="Disordered" evidence="3">
    <location>
        <begin position="1"/>
        <end position="21"/>
    </location>
</feature>
<feature type="region of interest" description="Disordered" evidence="3">
    <location>
        <begin position="41"/>
        <end position="87"/>
    </location>
</feature>
<feature type="compositionally biased region" description="Basic residues" evidence="3">
    <location>
        <begin position="1"/>
        <end position="11"/>
    </location>
</feature>
<feature type="compositionally biased region" description="Low complexity" evidence="3">
    <location>
        <begin position="12"/>
        <end position="21"/>
    </location>
</feature>
<feature type="compositionally biased region" description="Pro residues" evidence="3">
    <location>
        <begin position="46"/>
        <end position="74"/>
    </location>
</feature>
<feature type="active site" evidence="1">
    <location>
        <position position="223"/>
    </location>
</feature>
<feature type="active site" evidence="1">
    <location>
        <position position="279"/>
    </location>
</feature>
<name>MCA1_SCLS1</name>
<protein>
    <recommendedName>
        <fullName>Metacaspase-1</fullName>
        <ecNumber>3.4.22.-</ecNumber>
    </recommendedName>
</protein>
<evidence type="ECO:0000250" key="1"/>
<evidence type="ECO:0000255" key="2"/>
<evidence type="ECO:0000256" key="3">
    <source>
        <dbReference type="SAM" id="MobiDB-lite"/>
    </source>
</evidence>
<evidence type="ECO:0000305" key="4"/>
<reference key="1">
    <citation type="journal article" date="2011" name="PLoS Genet.">
        <title>Genomic analysis of the necrotrophic fungal pathogens Sclerotinia sclerotiorum and Botrytis cinerea.</title>
        <authorList>
            <person name="Amselem J."/>
            <person name="Cuomo C.A."/>
            <person name="van Kan J.A.L."/>
            <person name="Viaud M."/>
            <person name="Benito E.P."/>
            <person name="Couloux A."/>
            <person name="Coutinho P.M."/>
            <person name="de Vries R.P."/>
            <person name="Dyer P.S."/>
            <person name="Fillinger S."/>
            <person name="Fournier E."/>
            <person name="Gout L."/>
            <person name="Hahn M."/>
            <person name="Kohn L."/>
            <person name="Lapalu N."/>
            <person name="Plummer K.M."/>
            <person name="Pradier J.-M."/>
            <person name="Quevillon E."/>
            <person name="Sharon A."/>
            <person name="Simon A."/>
            <person name="ten Have A."/>
            <person name="Tudzynski B."/>
            <person name="Tudzynski P."/>
            <person name="Wincker P."/>
            <person name="Andrew M."/>
            <person name="Anthouard V."/>
            <person name="Beever R.E."/>
            <person name="Beffa R."/>
            <person name="Benoit I."/>
            <person name="Bouzid O."/>
            <person name="Brault B."/>
            <person name="Chen Z."/>
            <person name="Choquer M."/>
            <person name="Collemare J."/>
            <person name="Cotton P."/>
            <person name="Danchin E.G."/>
            <person name="Da Silva C."/>
            <person name="Gautier A."/>
            <person name="Giraud C."/>
            <person name="Giraud T."/>
            <person name="Gonzalez C."/>
            <person name="Grossetete S."/>
            <person name="Gueldener U."/>
            <person name="Henrissat B."/>
            <person name="Howlett B.J."/>
            <person name="Kodira C."/>
            <person name="Kretschmer M."/>
            <person name="Lappartient A."/>
            <person name="Leroch M."/>
            <person name="Levis C."/>
            <person name="Mauceli E."/>
            <person name="Neuveglise C."/>
            <person name="Oeser B."/>
            <person name="Pearson M."/>
            <person name="Poulain J."/>
            <person name="Poussereau N."/>
            <person name="Quesneville H."/>
            <person name="Rascle C."/>
            <person name="Schumacher J."/>
            <person name="Segurens B."/>
            <person name="Sexton A."/>
            <person name="Silva E."/>
            <person name="Sirven C."/>
            <person name="Soanes D.M."/>
            <person name="Talbot N.J."/>
            <person name="Templeton M."/>
            <person name="Yandava C."/>
            <person name="Yarden O."/>
            <person name="Zeng Q."/>
            <person name="Rollins J.A."/>
            <person name="Lebrun M.-H."/>
            <person name="Dickman M."/>
        </authorList>
    </citation>
    <scope>NUCLEOTIDE SEQUENCE [LARGE SCALE GENOMIC DNA]</scope>
    <source>
        <strain>ATCC 18683 / 1980 / Ss-1</strain>
    </source>
</reference>
<dbReference type="EC" id="3.4.22.-"/>
<dbReference type="EMBL" id="CH476637">
    <property type="protein sequence ID" value="EDN95117.1"/>
    <property type="molecule type" value="Genomic_DNA"/>
</dbReference>
<dbReference type="RefSeq" id="XP_001587752.1">
    <property type="nucleotide sequence ID" value="XM_001587702.1"/>
</dbReference>
<dbReference type="SMR" id="A7F075"/>
<dbReference type="FunCoup" id="A7F075">
    <property type="interactions" value="336"/>
</dbReference>
<dbReference type="STRING" id="665079.A7F075"/>
<dbReference type="EnsemblFungi" id="EDN95117">
    <property type="protein sequence ID" value="EDN95117"/>
    <property type="gene ID" value="SS1G_10992"/>
</dbReference>
<dbReference type="GeneID" id="5483933"/>
<dbReference type="KEGG" id="ssl:SS1G_10992"/>
<dbReference type="eggNOG" id="KOG1546">
    <property type="taxonomic scope" value="Eukaryota"/>
</dbReference>
<dbReference type="HOGENOM" id="CLU_029389_0_2_1"/>
<dbReference type="InParanoid" id="A7F075"/>
<dbReference type="OMA" id="MHRIMVT"/>
<dbReference type="Proteomes" id="UP000001312">
    <property type="component" value="Unassembled WGS sequence"/>
</dbReference>
<dbReference type="GO" id="GO:0005737">
    <property type="term" value="C:cytoplasm"/>
    <property type="evidence" value="ECO:0000318"/>
    <property type="project" value="GO_Central"/>
</dbReference>
<dbReference type="GO" id="GO:0004197">
    <property type="term" value="F:cysteine-type endopeptidase activity"/>
    <property type="evidence" value="ECO:0000318"/>
    <property type="project" value="GO_Central"/>
</dbReference>
<dbReference type="GO" id="GO:0006915">
    <property type="term" value="P:apoptotic process"/>
    <property type="evidence" value="ECO:0007669"/>
    <property type="project" value="UniProtKB-KW"/>
</dbReference>
<dbReference type="GO" id="GO:0006508">
    <property type="term" value="P:proteolysis"/>
    <property type="evidence" value="ECO:0000318"/>
    <property type="project" value="GO_Central"/>
</dbReference>
<dbReference type="Gene3D" id="3.40.50.12660">
    <property type="match status" value="1"/>
</dbReference>
<dbReference type="InterPro" id="IPR029030">
    <property type="entry name" value="Caspase-like_dom_sf"/>
</dbReference>
<dbReference type="InterPro" id="IPR050452">
    <property type="entry name" value="Metacaspase"/>
</dbReference>
<dbReference type="InterPro" id="IPR011600">
    <property type="entry name" value="Pept_C14_caspase"/>
</dbReference>
<dbReference type="PANTHER" id="PTHR48104:SF30">
    <property type="entry name" value="METACASPASE-1"/>
    <property type="match status" value="1"/>
</dbReference>
<dbReference type="PANTHER" id="PTHR48104">
    <property type="entry name" value="METACASPASE-4"/>
    <property type="match status" value="1"/>
</dbReference>
<dbReference type="Pfam" id="PF00656">
    <property type="entry name" value="Peptidase_C14"/>
    <property type="match status" value="1"/>
</dbReference>
<dbReference type="SUPFAM" id="SSF52129">
    <property type="entry name" value="Caspase-like"/>
    <property type="match status" value="1"/>
</dbReference>
<keyword id="KW-0053">Apoptosis</keyword>
<keyword id="KW-0378">Hydrolase</keyword>
<keyword id="KW-0645">Protease</keyword>
<keyword id="KW-1185">Reference proteome</keyword>
<keyword id="KW-0788">Thiol protease</keyword>
<keyword id="KW-0865">Zymogen</keyword>
<comment type="function">
    <text evidence="1">Involved in cell death (apoptosis).</text>
</comment>
<comment type="similarity">
    <text evidence="4">Belongs to the peptidase C14B family.</text>
</comment>
<proteinExistence type="inferred from homology"/>